<proteinExistence type="inferred from homology"/>
<keyword id="KW-0408">Iron</keyword>
<keyword id="KW-0479">Metal-binding</keyword>
<name>CYAY_PSEE4</name>
<accession>Q1I306</accession>
<organism>
    <name type="scientific">Pseudomonas entomophila (strain L48)</name>
    <dbReference type="NCBI Taxonomy" id="384676"/>
    <lineage>
        <taxon>Bacteria</taxon>
        <taxon>Pseudomonadati</taxon>
        <taxon>Pseudomonadota</taxon>
        <taxon>Gammaproteobacteria</taxon>
        <taxon>Pseudomonadales</taxon>
        <taxon>Pseudomonadaceae</taxon>
        <taxon>Pseudomonas</taxon>
    </lineage>
</organism>
<evidence type="ECO:0000255" key="1">
    <source>
        <dbReference type="HAMAP-Rule" id="MF_00142"/>
    </source>
</evidence>
<dbReference type="EMBL" id="CT573326">
    <property type="protein sequence ID" value="CAK17980.1"/>
    <property type="molecule type" value="Genomic_DNA"/>
</dbReference>
<dbReference type="RefSeq" id="WP_011536338.1">
    <property type="nucleotide sequence ID" value="NC_008027.1"/>
</dbReference>
<dbReference type="SMR" id="Q1I306"/>
<dbReference type="STRING" id="384676.PSEEN5363"/>
<dbReference type="GeneID" id="32808275"/>
<dbReference type="KEGG" id="pen:PSEEN5363"/>
<dbReference type="eggNOG" id="COG1965">
    <property type="taxonomic scope" value="Bacteria"/>
</dbReference>
<dbReference type="HOGENOM" id="CLU_080880_3_0_6"/>
<dbReference type="OrthoDB" id="285675at2"/>
<dbReference type="Proteomes" id="UP000000658">
    <property type="component" value="Chromosome"/>
</dbReference>
<dbReference type="GO" id="GO:0005829">
    <property type="term" value="C:cytosol"/>
    <property type="evidence" value="ECO:0007669"/>
    <property type="project" value="TreeGrafter"/>
</dbReference>
<dbReference type="GO" id="GO:0008199">
    <property type="term" value="F:ferric iron binding"/>
    <property type="evidence" value="ECO:0007669"/>
    <property type="project" value="InterPro"/>
</dbReference>
<dbReference type="GO" id="GO:0008198">
    <property type="term" value="F:ferrous iron binding"/>
    <property type="evidence" value="ECO:0007669"/>
    <property type="project" value="TreeGrafter"/>
</dbReference>
<dbReference type="GO" id="GO:0016226">
    <property type="term" value="P:iron-sulfur cluster assembly"/>
    <property type="evidence" value="ECO:0007669"/>
    <property type="project" value="UniProtKB-UniRule"/>
</dbReference>
<dbReference type="Gene3D" id="3.30.920.10">
    <property type="entry name" value="Frataxin/CyaY"/>
    <property type="match status" value="1"/>
</dbReference>
<dbReference type="HAMAP" id="MF_00142">
    <property type="entry name" value="CyaY"/>
    <property type="match status" value="1"/>
</dbReference>
<dbReference type="InterPro" id="IPR047584">
    <property type="entry name" value="CyaY"/>
</dbReference>
<dbReference type="InterPro" id="IPR002908">
    <property type="entry name" value="Frataxin/CyaY"/>
</dbReference>
<dbReference type="InterPro" id="IPR036524">
    <property type="entry name" value="Frataxin/CyaY_sf"/>
</dbReference>
<dbReference type="InterPro" id="IPR020895">
    <property type="entry name" value="Frataxin_CS"/>
</dbReference>
<dbReference type="NCBIfam" id="TIGR03421">
    <property type="entry name" value="FeS_CyaY"/>
    <property type="match status" value="1"/>
</dbReference>
<dbReference type="PANTHER" id="PTHR16821">
    <property type="entry name" value="FRATAXIN"/>
    <property type="match status" value="1"/>
</dbReference>
<dbReference type="PANTHER" id="PTHR16821:SF2">
    <property type="entry name" value="FRATAXIN, MITOCHONDRIAL"/>
    <property type="match status" value="1"/>
</dbReference>
<dbReference type="Pfam" id="PF01491">
    <property type="entry name" value="Frataxin_Cyay"/>
    <property type="match status" value="1"/>
</dbReference>
<dbReference type="SMART" id="SM01219">
    <property type="entry name" value="Frataxin_Cyay"/>
    <property type="match status" value="1"/>
</dbReference>
<dbReference type="SUPFAM" id="SSF55387">
    <property type="entry name" value="Frataxin/Nqo15-like"/>
    <property type="match status" value="1"/>
</dbReference>
<dbReference type="PROSITE" id="PS01344">
    <property type="entry name" value="FRATAXIN_1"/>
    <property type="match status" value="1"/>
</dbReference>
<dbReference type="PROSITE" id="PS50810">
    <property type="entry name" value="FRATAXIN_2"/>
    <property type="match status" value="1"/>
</dbReference>
<protein>
    <recommendedName>
        <fullName evidence="1">Iron-sulfur cluster assembly protein CyaY</fullName>
    </recommendedName>
</protein>
<comment type="function">
    <text evidence="1">Involved in iron-sulfur (Fe-S) cluster assembly. May act as a regulator of Fe-S biogenesis.</text>
</comment>
<comment type="similarity">
    <text evidence="1">Belongs to the frataxin family.</text>
</comment>
<sequence length="110" mass="12748">MSLSEARFHDLVDATQQALEDLFDESDLDLDMENSAGVLTVKFDNGSQLIFSRQEPLRQLWLADRSGGFHFDYDEESGKWVCEKTEELLGEMLERIVWERAGEKLDFDEI</sequence>
<reference key="1">
    <citation type="journal article" date="2006" name="Nat. Biotechnol.">
        <title>Complete genome sequence of the entomopathogenic and metabolically versatile soil bacterium Pseudomonas entomophila.</title>
        <authorList>
            <person name="Vodovar N."/>
            <person name="Vallenet D."/>
            <person name="Cruveiller S."/>
            <person name="Rouy Z."/>
            <person name="Barbe V."/>
            <person name="Acosta C."/>
            <person name="Cattolico L."/>
            <person name="Jubin C."/>
            <person name="Lajus A."/>
            <person name="Segurens B."/>
            <person name="Vacherie B."/>
            <person name="Wincker P."/>
            <person name="Weissenbach J."/>
            <person name="Lemaitre B."/>
            <person name="Medigue C."/>
            <person name="Boccard F."/>
        </authorList>
    </citation>
    <scope>NUCLEOTIDE SEQUENCE [LARGE SCALE GENOMIC DNA]</scope>
    <source>
        <strain>L48</strain>
    </source>
</reference>
<gene>
    <name evidence="1" type="primary">cyaY</name>
    <name type="ordered locus">PSEEN5363</name>
</gene>
<feature type="chain" id="PRO_1000010939" description="Iron-sulfur cluster assembly protein CyaY">
    <location>
        <begin position="1"/>
        <end position="110"/>
    </location>
</feature>